<gene>
    <name evidence="16" type="primary">easF</name>
    <name evidence="15" type="synonym">orfB</name>
</gene>
<accession>Q5G5T6</accession>
<organism>
    <name type="scientific">Claviceps purpurea</name>
    <name type="common">Ergot fungus</name>
    <name type="synonym">Sphacelia segetum</name>
    <dbReference type="NCBI Taxonomy" id="5111"/>
    <lineage>
        <taxon>Eukaryota</taxon>
        <taxon>Fungi</taxon>
        <taxon>Dikarya</taxon>
        <taxon>Ascomycota</taxon>
        <taxon>Pezizomycotina</taxon>
        <taxon>Sordariomycetes</taxon>
        <taxon>Hypocreomycetidae</taxon>
        <taxon>Hypocreales</taxon>
        <taxon>Clavicipitaceae</taxon>
        <taxon>Claviceps</taxon>
    </lineage>
</organism>
<proteinExistence type="inferred from homology"/>
<name>EASF_CLAPU</name>
<evidence type="ECO:0000250" key="1">
    <source>
        <dbReference type="UniProtKB" id="B6D5I7"/>
    </source>
</evidence>
<evidence type="ECO:0000250" key="2">
    <source>
        <dbReference type="UniProtKB" id="Q50EL0"/>
    </source>
</evidence>
<evidence type="ECO:0000269" key="3">
    <source>
    </source>
</evidence>
<evidence type="ECO:0000269" key="4">
    <source>
    </source>
</evidence>
<evidence type="ECO:0000269" key="5">
    <source>
    </source>
</evidence>
<evidence type="ECO:0000269" key="6">
    <source>
    </source>
</evidence>
<evidence type="ECO:0000269" key="7">
    <source>
    </source>
</evidence>
<evidence type="ECO:0000269" key="8">
    <source>
    </source>
</evidence>
<evidence type="ECO:0000269" key="9">
    <source>
    </source>
</evidence>
<evidence type="ECO:0000269" key="10">
    <source>
    </source>
</evidence>
<evidence type="ECO:0000269" key="11">
    <source>
    </source>
</evidence>
<evidence type="ECO:0000269" key="12">
    <source>
    </source>
</evidence>
<evidence type="ECO:0000269" key="13">
    <source>
    </source>
</evidence>
<evidence type="ECO:0000269" key="14">
    <source>
    </source>
</evidence>
<evidence type="ECO:0000303" key="15">
    <source>
    </source>
</evidence>
<evidence type="ECO:0000303" key="16">
    <source>
    </source>
</evidence>
<evidence type="ECO:0000305" key="17"/>
<evidence type="ECO:0000305" key="18">
    <source>
    </source>
</evidence>
<evidence type="ECO:0000305" key="19">
    <source>
    </source>
</evidence>
<evidence type="ECO:0000305" key="20">
    <source>
    </source>
</evidence>
<feature type="chain" id="PRO_0000439136" description="4-dimethylallyltryptophan N-methyltransferase easF">
    <location>
        <begin position="1"/>
        <end position="344"/>
    </location>
</feature>
<protein>
    <recommendedName>
        <fullName evidence="1">4-dimethylallyltryptophan N-methyltransferase easF</fullName>
        <ecNumber evidence="1">2.1.1.261</ecNumber>
    </recommendedName>
    <alternativeName>
        <fullName evidence="1">4-dimethylallyltryptophan methyltransferase</fullName>
    </alternativeName>
    <alternativeName>
        <fullName evidence="16">Ergot alkaloid synthesis protein F</fullName>
    </alternativeName>
</protein>
<sequence>MPALPVIDIRSNHVEDSLPEQIIKGLTSQPKTLPPLLFYSNEGLEHWNHHSRQPDFYPRRQEIEILKQGGNDIARSIAPSSVILDLGSANLEKVGYLLEALEAQEKDVLYFALDISAPQLATTLKEIPSSNFRHVRFAGLHGTFEDGLRWINETPEIRDLPHCVLLLGLTIGNFSRQNAAAFLQNIANHALTGASKNKSSILLSLDSCKVPTKVTRAYTSDGVVPFALQALTYAKALLCDRIDNGIDEKVLSCNLRPEHWHYLSEWNFALGRHEASLIPRFGDVCLGSMLQDIVVKKDEKVRFACSYKYDAKERQKLFLDSGVDQGMVWTNEGCDVAIYELKLA</sequence>
<reference key="1">
    <citation type="submission" date="2004-11" db="EMBL/GenBank/DDBJ databases">
        <title>Studies of ergot alkaloid biosynthesis genes in Clavicipitaceous fungi.</title>
        <authorList>
            <person name="Machado C."/>
            <person name="Schardl C.L."/>
        </authorList>
    </citation>
    <scope>NUCLEOTIDE SEQUENCE [GENOMIC DNA]</scope>
    <source>
        <strain>ATCC20102</strain>
    </source>
</reference>
<reference key="2">
    <citation type="journal article" date="1999" name="Mol. Gen. Genet.">
        <title>Evidence for an ergot alkaloid gene cluster in Claviceps purpurea.</title>
        <authorList>
            <person name="Tudzynski P."/>
            <person name="Hoelter K."/>
            <person name="Correia T.H."/>
            <person name="Arntz C."/>
            <person name="Grammel N."/>
            <person name="Keller U."/>
        </authorList>
    </citation>
    <scope>FUNCTION</scope>
    <scope>IDENTIFICATION IN THE EAS CLUSTER</scope>
    <source>
        <strain>P1 / 1029/N5</strain>
    </source>
</reference>
<reference key="3">
    <citation type="journal article" date="2001" name="Appl. Microbiol. Biotechnol.">
        <title>Biotechnology and genetics of ergot alkaloids.</title>
        <authorList>
            <person name="Tudzynski P."/>
            <person name="Correia T."/>
            <person name="Keller U."/>
        </authorList>
    </citation>
    <scope>BIOTECHNOLOGY</scope>
    <source>
        <strain>P1 / 1029/N5</strain>
    </source>
</reference>
<reference key="4">
    <citation type="journal article" date="2003" name="Chem. Biol.">
        <title>Molecular cloning and analysis of the ergopeptine assembly system in the ergot fungus Claviceps purpurea.</title>
        <authorList>
            <person name="Correia T."/>
            <person name="Grammel N."/>
            <person name="Ortel I."/>
            <person name="Keller U."/>
            <person name="Tudzynski P."/>
        </authorList>
    </citation>
    <scope>FUNCTION</scope>
</reference>
<reference key="5">
    <citation type="journal article" date="2004" name="Fungal Genet. Biol.">
        <title>The determinant step in ergot alkaloid biosynthesis by an endophyte of perennial ryegrass.</title>
        <authorList>
            <person name="Wang J."/>
            <person name="Machado C."/>
            <person name="Panaccione D.G."/>
            <person name="Tsai H.-F."/>
            <person name="Schardl C.L."/>
        </authorList>
    </citation>
    <scope>FUNCTION</scope>
    <source>
        <strain>ATCC 20102 / Farmitalia FI 32/17</strain>
    </source>
</reference>
<reference key="6">
    <citation type="journal article" date="2005" name="Phytochemistry">
        <title>The ergot alkaloid gene cluster in Claviceps purpurea: extension of the cluster sequence and intra species evolution.</title>
        <authorList>
            <person name="Haarmann T."/>
            <person name="Machado C."/>
            <person name="Lubbe Y."/>
            <person name="Correia T."/>
            <person name="Schardl C.L."/>
            <person name="Panaccione D.G."/>
            <person name="Tudzynski P."/>
        </authorList>
    </citation>
    <scope>FUNCTION</scope>
    <scope>IDENTIFICATION IN THE EAS CLUSTER</scope>
</reference>
<reference key="7">
    <citation type="journal article" date="2006" name="ChemBioChem">
        <title>Identification of the cytochrome P450 monooxygenase that bridges the clavine and ergoline alkaloid pathways.</title>
        <authorList>
            <person name="Haarmann T."/>
            <person name="Ortel I."/>
            <person name="Tudzynski P."/>
            <person name="Keller U."/>
        </authorList>
    </citation>
    <scope>FUNCTION</scope>
    <source>
        <strain>P1 / 1029/N5</strain>
    </source>
</reference>
<reference key="8">
    <citation type="journal article" date="2007" name="Appl. Environ. Microbiol.">
        <title>A complex ergovaline gene cluster in epichloe endophytes of grasses.</title>
        <authorList>
            <person name="Fleetwood D.J."/>
            <person name="Scott B."/>
            <person name="Lane G.A."/>
            <person name="Tanaka A."/>
            <person name="Johnson R.D."/>
        </authorList>
    </citation>
    <scope>FUNCTION</scope>
</reference>
<reference key="9">
    <citation type="journal article" date="2007" name="Appl. Environ. Microbiol.">
        <title>Comparison of ergot alkaloid biosynthesis gene clusters in Claviceps species indicates loss of late pathway steps in evolution of C. fusiformis.</title>
        <authorList>
            <person name="Lorenz N."/>
            <person name="Wilson E.V."/>
            <person name="Machado C."/>
            <person name="Schardl C.L."/>
            <person name="Tudzynski P."/>
        </authorList>
    </citation>
    <scope>FUNCTION</scope>
</reference>
<reference key="10">
    <citation type="journal article" date="2008" name="Fungal Genet. Biol.">
        <title>Use of a nonhomologous end joining deficient strain (Deltaku70) of the ergot fungus Claviceps purpurea for identification of a nonribosomal peptide synthetase gene involved in ergotamine biosynthesis.</title>
        <authorList>
            <person name="Haarmann T."/>
            <person name="Lorenz N."/>
            <person name="Tudzynski P."/>
        </authorList>
    </citation>
    <scope>FUNCTION</scope>
</reference>
<reference key="11">
    <citation type="journal article" date="2009" name="J. Biol. Chem.">
        <title>Combinatorial assembly of simple and complex D-lysergic acid alkaloid peptide classes in the ergot fungus Claviceps purpurea.</title>
        <authorList>
            <person name="Ortel I."/>
            <person name="Keller U."/>
        </authorList>
    </citation>
    <scope>FUNCTION</scope>
</reference>
<reference key="12">
    <citation type="journal article" date="2010" name="Appl. Environ. Microbiol.">
        <title>Alkaloid cluster gene ccsA of the ergot fungus Claviceps purpurea encodes chanoclavine I synthase, a flavin adenine dinucleotide-containing oxidoreductase mediating the transformation of N-methyl-dimethylallyltryptophan to chanoclavine I.</title>
        <authorList>
            <person name="Lorenz N."/>
            <person name="Olsovska J."/>
            <person name="Sulc M."/>
            <person name="Tudzynski P."/>
        </authorList>
    </citation>
    <scope>FUNCTION</scope>
</reference>
<reference key="13">
    <citation type="journal article" date="2010" name="J. Am. Chem. Soc.">
        <title>Controlling a structural branch point in ergot alkaloid biosynthesis.</title>
        <authorList>
            <person name="Cheng J.Z."/>
            <person name="Coyle C.M."/>
            <person name="Panaccione D.G."/>
            <person name="O'Connor S.E."/>
        </authorList>
    </citation>
    <scope>FUNCTION</scope>
    <source>
        <strain>ATCC 20102 / Farmitalia FI 32/17</strain>
    </source>
</reference>
<reference key="14">
    <citation type="journal article" date="2011" name="Curr. Genet.">
        <title>Ergot cluster-encoded catalase is required for synthesis of chanoclavine-I in Aspergillus fumigatus.</title>
        <authorList>
            <person name="Goetz K.E."/>
            <person name="Coyle C.M."/>
            <person name="Cheng J.Z."/>
            <person name="O'Connor S.E."/>
            <person name="Panaccione D.G."/>
        </authorList>
    </citation>
    <scope>FUNCTION</scope>
</reference>
<reference key="15">
    <citation type="journal article" date="2011" name="Org. Biomol. Chem.">
        <title>New insights into ergot alkaloid biosynthesis in Claviceps purpurea: an agroclavine synthase EasG catalyses, via a non-enzymatic adduct with reduced glutathione, the conversion of chanoclavine-I aldehyde to agroclavine.</title>
        <authorList>
            <person name="Matuschek M."/>
            <person name="Wallwey C."/>
            <person name="Xie X."/>
            <person name="Li S.M."/>
        </authorList>
    </citation>
    <scope>FUNCTION</scope>
</reference>
<reference key="16">
    <citation type="journal article" date="2014" name="Chem. Biol.">
        <title>Cyclolization of D-lysergic acid alkaloid peptides.</title>
        <authorList>
            <person name="Havemann J."/>
            <person name="Vogel D."/>
            <person name="Loll B."/>
            <person name="Keller U."/>
        </authorList>
    </citation>
    <scope>FUNCTION</scope>
</reference>
<keyword id="KW-0017">Alkaloid metabolism</keyword>
<keyword id="KW-0489">Methyltransferase</keyword>
<keyword id="KW-0949">S-adenosyl-L-methionine</keyword>
<keyword id="KW-0808">Transferase</keyword>
<dbReference type="EC" id="2.1.1.261" evidence="1"/>
<dbReference type="EMBL" id="AY836772">
    <property type="protein sequence ID" value="AAW57090.1"/>
    <property type="molecule type" value="Genomic_DNA"/>
</dbReference>
<dbReference type="SMR" id="Q5G5T6"/>
<dbReference type="VEuPathDB" id="FungiDB:CPUR_04078"/>
<dbReference type="UniPathway" id="UPA00327"/>
<dbReference type="GO" id="GO:0008168">
    <property type="term" value="F:methyltransferase activity"/>
    <property type="evidence" value="ECO:0007669"/>
    <property type="project" value="UniProtKB-KW"/>
</dbReference>
<dbReference type="GO" id="GO:0035835">
    <property type="term" value="P:indole alkaloid biosynthetic process"/>
    <property type="evidence" value="ECO:0007669"/>
    <property type="project" value="UniProtKB-UniPathway"/>
</dbReference>
<dbReference type="GO" id="GO:0032259">
    <property type="term" value="P:methylation"/>
    <property type="evidence" value="ECO:0007669"/>
    <property type="project" value="UniProtKB-KW"/>
</dbReference>
<dbReference type="Gene3D" id="3.40.50.150">
    <property type="entry name" value="Vaccinia Virus protein VP39"/>
    <property type="match status" value="1"/>
</dbReference>
<dbReference type="InterPro" id="IPR051128">
    <property type="entry name" value="EgtD_Methyltrsf_superfamily"/>
</dbReference>
<dbReference type="InterPro" id="IPR019257">
    <property type="entry name" value="MeTrfase_dom"/>
</dbReference>
<dbReference type="InterPro" id="IPR017804">
    <property type="entry name" value="MeTrfase_EgtD-like"/>
</dbReference>
<dbReference type="InterPro" id="IPR029063">
    <property type="entry name" value="SAM-dependent_MTases_sf"/>
</dbReference>
<dbReference type="InterPro" id="IPR017805">
    <property type="entry name" value="SAM_MeTrfase_EasF-type_put"/>
</dbReference>
<dbReference type="NCBIfam" id="TIGR03439">
    <property type="entry name" value="methyl_EasF"/>
    <property type="match status" value="1"/>
</dbReference>
<dbReference type="PANTHER" id="PTHR43397">
    <property type="entry name" value="ERGOTHIONEINE BIOSYNTHESIS PROTEIN 1"/>
    <property type="match status" value="1"/>
</dbReference>
<dbReference type="PANTHER" id="PTHR43397:SF1">
    <property type="entry name" value="ERGOTHIONEINE BIOSYNTHESIS PROTEIN 1"/>
    <property type="match status" value="1"/>
</dbReference>
<dbReference type="Pfam" id="PF10017">
    <property type="entry name" value="Methyltransf_33"/>
    <property type="match status" value="1"/>
</dbReference>
<dbReference type="PIRSF" id="PIRSF018005">
    <property type="entry name" value="UCP018005"/>
    <property type="match status" value="1"/>
</dbReference>
<comment type="function">
    <text evidence="2 3 4 5 6 7 8 9 10 11 12 13 14 19 20">4-dimethylallyltryptophan N-methyltransferase; part of the gene cluster that mediates the biosynthesis of fungal ergot alkaloid (PubMed:10071219, PubMed:14700635, PubMed:14732265, PubMed:15904941, PubMed:17308187, PubMed:17720822). DmaW catalyzes the first step of ergot alkaloid biosynthesis by condensing dimethylallyl diphosphate (DMAP) and tryptophan to form 4-dimethylallyl-L-tryptophan (PubMed:14732265). The second step is catalyzed by the methyltransferase easF that methylates 4-dimethylallyl-L-tryptophan in the presence of S-adenosyl-L-methionine, resulting in the formation of 4-dimethylallyl-L-abrine (By similarity). The catalase easC and the FAD-dependent oxidoreductase easE then transform 4-dimethylallyl-L-abrine to chanoclavine-I which is further oxidized by easD in the presence of NAD(+), resulting in the formation of chanoclavine-I aldehyde (PubMed:20118373, PubMed:21409592). Agroclavine dehydrogenase easG then mediates the conversion of chanoclavine-I aldehyde to agroclavine via a non-enzymatic adduct reaction: the substrate is an iminium intermediate that is formed spontaneously from chanoclavine-I aldehyde in the presence of glutathione (PubMed:20735127, PubMed:21494745). The presence of easA is not required to complete this reaction (PubMed:21494745). Further conversion of agroclavine to paspalic acid is a two-step process involving oxidation of agroclavine to elymoclavine and of elymoclavine to paspalic acid, the second step being performed by the elymoclavine oxidase cloA (PubMed:16538694, PubMed:17720822). Paspalic acid is then further converted to D-lysergic acid (PubMed:15904941). Ergopeptines are assembled from D-lysergic acid and three different amino acids by the D-lysergyl-peptide-synthetases composed each of a monomudular and a trimodular nonribosomal peptide synthetase subunit (PubMed:14700635, PubMed:15904941). LpsB and lpsC encode the monomodular subunits responsible for D-lysergic acid activation and incorporation into the ergopeptine backbone (PubMed:14700635). LpsA1 and A2 subunits encode the trimodular nonribosomal peptide synthetase assembling the tripeptide portion of ergopeptines (PubMed:14700635). LpsA1 is responsible for formation of the major ergopeptine, ergotamine, and lpsA2 for alpha-ergocryptine, the minor ergopeptine of the total alkaloid mixture elaborated by C.purpurea (PubMed:17560817, PubMed:19139103). D-lysergyl-tripeptides are assembled by the nonribosomal peptide synthetases and released as N-(D-lysergyl-aminoacyl)-lactams (PubMed:24361048). Cyclolization of the D-lysergyl-tripeptides is performed by the Fe(2+)/2-ketoglutarate-dependent dioxygenase easH which introduces a hydroxyl group into N-(D-lysergyl-aminoacyl)-lactam at alpha-C of the aminoacyl residue followed by spontaneous condensation with the terminal lactam carbonyl group (PubMed:24361048).</text>
</comment>
<comment type="catalytic activity">
    <reaction evidence="1">
        <text>4-(3-methylbut-2-enyl)-L-tryptophan + S-adenosyl-L-methionine = 4-(3-methylbut-2-enyl)-L-abrine + S-adenosyl-L-homocysteine + H(+)</text>
        <dbReference type="Rhea" id="RHEA:34435"/>
        <dbReference type="ChEBI" id="CHEBI:15378"/>
        <dbReference type="ChEBI" id="CHEBI:57856"/>
        <dbReference type="ChEBI" id="CHEBI:58209"/>
        <dbReference type="ChEBI" id="CHEBI:59789"/>
        <dbReference type="ChEBI" id="CHEBI:67248"/>
        <dbReference type="EC" id="2.1.1.261"/>
    </reaction>
</comment>
<comment type="pathway">
    <text evidence="18">Alkaloid biosynthesis; ergot alkaloid biosynthesis.</text>
</comment>
<comment type="subunit">
    <text evidence="1">Homodimer.</text>
</comment>
<comment type="similarity">
    <text evidence="17">Belongs to the methyltransferase superfamily.</text>
</comment>